<dbReference type="EC" id="3.1.3.15" evidence="1"/>
<dbReference type="EC" id="4.2.1.19" evidence="1"/>
<dbReference type="EMBL" id="AF067228">
    <property type="protein sequence ID" value="AAC97357.1"/>
    <property type="molecule type" value="Genomic_DNA"/>
</dbReference>
<dbReference type="EMBL" id="AE013218">
    <property type="protein sequence ID" value="AAM67665.1"/>
    <property type="molecule type" value="Genomic_DNA"/>
</dbReference>
<dbReference type="RefSeq" id="WP_011053631.1">
    <property type="nucleotide sequence ID" value="NC_004061.1"/>
</dbReference>
<dbReference type="SMR" id="Q9ZHE4"/>
<dbReference type="STRING" id="198804.BUsg_095"/>
<dbReference type="GeneID" id="93003564"/>
<dbReference type="KEGG" id="bas:BUsg_095"/>
<dbReference type="eggNOG" id="COG0131">
    <property type="taxonomic scope" value="Bacteria"/>
</dbReference>
<dbReference type="eggNOG" id="COG0241">
    <property type="taxonomic scope" value="Bacteria"/>
</dbReference>
<dbReference type="HOGENOM" id="CLU_044308_0_0_6"/>
<dbReference type="UniPathway" id="UPA00031">
    <property type="reaction ID" value="UER00011"/>
</dbReference>
<dbReference type="UniPathway" id="UPA00031">
    <property type="reaction ID" value="UER00013"/>
</dbReference>
<dbReference type="Proteomes" id="UP000000416">
    <property type="component" value="Chromosome"/>
</dbReference>
<dbReference type="GO" id="GO:0005737">
    <property type="term" value="C:cytoplasm"/>
    <property type="evidence" value="ECO:0007669"/>
    <property type="project" value="UniProtKB-SubCell"/>
</dbReference>
<dbReference type="GO" id="GO:0004401">
    <property type="term" value="F:histidinol-phosphatase activity"/>
    <property type="evidence" value="ECO:0007669"/>
    <property type="project" value="UniProtKB-UniRule"/>
</dbReference>
<dbReference type="GO" id="GO:0004424">
    <property type="term" value="F:imidazoleglycerol-phosphate dehydratase activity"/>
    <property type="evidence" value="ECO:0007669"/>
    <property type="project" value="UniProtKB-UniRule"/>
</dbReference>
<dbReference type="GO" id="GO:0046872">
    <property type="term" value="F:metal ion binding"/>
    <property type="evidence" value="ECO:0007669"/>
    <property type="project" value="UniProtKB-KW"/>
</dbReference>
<dbReference type="GO" id="GO:0000105">
    <property type="term" value="P:L-histidine biosynthetic process"/>
    <property type="evidence" value="ECO:0007669"/>
    <property type="project" value="UniProtKB-UniRule"/>
</dbReference>
<dbReference type="CDD" id="cd07503">
    <property type="entry name" value="HAD_HisB-N"/>
    <property type="match status" value="1"/>
</dbReference>
<dbReference type="CDD" id="cd07914">
    <property type="entry name" value="IGPD"/>
    <property type="match status" value="1"/>
</dbReference>
<dbReference type="FunFam" id="3.30.230.40:FF:000001">
    <property type="entry name" value="Imidazoleglycerol-phosphate dehydratase HisB"/>
    <property type="match status" value="1"/>
</dbReference>
<dbReference type="FunFam" id="3.30.230.40:FF:000003">
    <property type="entry name" value="Imidazoleglycerol-phosphate dehydratase HisB"/>
    <property type="match status" value="1"/>
</dbReference>
<dbReference type="Gene3D" id="3.40.50.1000">
    <property type="entry name" value="HAD superfamily/HAD-like"/>
    <property type="match status" value="1"/>
</dbReference>
<dbReference type="Gene3D" id="3.30.230.40">
    <property type="entry name" value="Imidazole glycerol phosphate dehydratase, domain 1"/>
    <property type="match status" value="2"/>
</dbReference>
<dbReference type="HAMAP" id="MF_01022">
    <property type="entry name" value="Bifunc_HisB"/>
    <property type="match status" value="1"/>
</dbReference>
<dbReference type="HAMAP" id="MF_00076">
    <property type="entry name" value="HisB"/>
    <property type="match status" value="1"/>
</dbReference>
<dbReference type="InterPro" id="IPR036412">
    <property type="entry name" value="HAD-like_sf"/>
</dbReference>
<dbReference type="InterPro" id="IPR006549">
    <property type="entry name" value="HAD-SF_hydro_IIIA"/>
</dbReference>
<dbReference type="InterPro" id="IPR023214">
    <property type="entry name" value="HAD_sf"/>
</dbReference>
<dbReference type="InterPro" id="IPR020566">
    <property type="entry name" value="His_synth_bifunc_HisB"/>
</dbReference>
<dbReference type="InterPro" id="IPR005954">
    <property type="entry name" value="HisB_N"/>
</dbReference>
<dbReference type="InterPro" id="IPR006543">
    <property type="entry name" value="Histidinol-phos"/>
</dbReference>
<dbReference type="InterPro" id="IPR038494">
    <property type="entry name" value="IGPD_sf"/>
</dbReference>
<dbReference type="InterPro" id="IPR000807">
    <property type="entry name" value="ImidazoleglycerolP_deHydtase"/>
</dbReference>
<dbReference type="InterPro" id="IPR020565">
    <property type="entry name" value="ImidazoleglycerP_deHydtase_CS"/>
</dbReference>
<dbReference type="InterPro" id="IPR020568">
    <property type="entry name" value="Ribosomal_Su5_D2-typ_SF"/>
</dbReference>
<dbReference type="NCBIfam" id="TIGR01662">
    <property type="entry name" value="HAD-SF-IIIA"/>
    <property type="match status" value="1"/>
</dbReference>
<dbReference type="NCBIfam" id="TIGR01261">
    <property type="entry name" value="hisB_Nterm"/>
    <property type="match status" value="1"/>
</dbReference>
<dbReference type="NCBIfam" id="TIGR01656">
    <property type="entry name" value="Histidinol-ppas"/>
    <property type="match status" value="1"/>
</dbReference>
<dbReference type="NCBIfam" id="NF002111">
    <property type="entry name" value="PRK00951.2-1"/>
    <property type="match status" value="1"/>
</dbReference>
<dbReference type="NCBIfam" id="NF002114">
    <property type="entry name" value="PRK00951.2-4"/>
    <property type="match status" value="1"/>
</dbReference>
<dbReference type="NCBIfam" id="NF003937">
    <property type="entry name" value="PRK05446.1"/>
    <property type="match status" value="1"/>
</dbReference>
<dbReference type="PANTHER" id="PTHR23133:SF2">
    <property type="entry name" value="IMIDAZOLEGLYCEROL-PHOSPHATE DEHYDRATASE"/>
    <property type="match status" value="1"/>
</dbReference>
<dbReference type="PANTHER" id="PTHR23133">
    <property type="entry name" value="IMIDAZOLEGLYCEROL-PHOSPHATE DEHYDRATASE HIS7"/>
    <property type="match status" value="1"/>
</dbReference>
<dbReference type="Pfam" id="PF13242">
    <property type="entry name" value="Hydrolase_like"/>
    <property type="match status" value="1"/>
</dbReference>
<dbReference type="Pfam" id="PF00475">
    <property type="entry name" value="IGPD"/>
    <property type="match status" value="1"/>
</dbReference>
<dbReference type="SUPFAM" id="SSF56784">
    <property type="entry name" value="HAD-like"/>
    <property type="match status" value="1"/>
</dbReference>
<dbReference type="SUPFAM" id="SSF54211">
    <property type="entry name" value="Ribosomal protein S5 domain 2-like"/>
    <property type="match status" value="2"/>
</dbReference>
<dbReference type="PROSITE" id="PS00954">
    <property type="entry name" value="IGP_DEHYDRATASE_1"/>
    <property type="match status" value="1"/>
</dbReference>
<dbReference type="PROSITE" id="PS00955">
    <property type="entry name" value="IGP_DEHYDRATASE_2"/>
    <property type="match status" value="1"/>
</dbReference>
<sequence length="355" mass="41303">MKQKILFIDRDGTLIHEPSNDCQVDAINKLEFKKYIISSLCQLMNFGYKFVMVTNQDGLGSKSFPRENFNIPHFFMLNIFRSEGIIFEDVLICPHFLDDNCDCRKPQTKLLKPWLKKNKIDKQRSYVIGDRETDMELAKNINLTGIQYKEKEFNWIDITKEIIKRNRYREVIRETKETYIHIKLWLDLEHHSCIQTGINFFDHMLEQLSIHSGISMYILAKGDLQIDDHHTIEDTGIVLGEALSQALNNKNGLSRYGFVLPMDESQAKCIIDLSNRPYLSFNAHFKHKMVGDMNTDMVEHFFYSLCCSMKITLHIDVKGKNDHHCIESLFKAFGRALRKAVKIEGNTLPTSKGIL</sequence>
<name>HIS7_BUCAP</name>
<feature type="chain" id="PRO_0000158202" description="Histidine biosynthesis bifunctional protein HisB">
    <location>
        <begin position="1"/>
        <end position="355"/>
    </location>
</feature>
<feature type="region of interest" description="Histidinol-phosphatase" evidence="1">
    <location>
        <begin position="1"/>
        <end position="166"/>
    </location>
</feature>
<feature type="region of interest" description="Imidazoleglycerol-phosphate dehydratase" evidence="1">
    <location>
        <begin position="167"/>
        <end position="355"/>
    </location>
</feature>
<feature type="active site" description="Nucleophile" evidence="1">
    <location>
        <position position="9"/>
    </location>
</feature>
<feature type="active site" description="Proton donor" evidence="1">
    <location>
        <position position="11"/>
    </location>
</feature>
<feature type="binding site" evidence="1">
    <location>
        <position position="9"/>
    </location>
    <ligand>
        <name>Mg(2+)</name>
        <dbReference type="ChEBI" id="CHEBI:18420"/>
    </ligand>
</feature>
<feature type="binding site" evidence="1">
    <location>
        <position position="11"/>
    </location>
    <ligand>
        <name>Mg(2+)</name>
        <dbReference type="ChEBI" id="CHEBI:18420"/>
    </ligand>
</feature>
<feature type="binding site" evidence="1">
    <location>
        <position position="93"/>
    </location>
    <ligand>
        <name>Zn(2+)</name>
        <dbReference type="ChEBI" id="CHEBI:29105"/>
    </ligand>
</feature>
<feature type="binding site" evidence="1">
    <location>
        <position position="95"/>
    </location>
    <ligand>
        <name>Zn(2+)</name>
        <dbReference type="ChEBI" id="CHEBI:29105"/>
    </ligand>
</feature>
<feature type="binding site" evidence="1">
    <location>
        <position position="101"/>
    </location>
    <ligand>
        <name>Zn(2+)</name>
        <dbReference type="ChEBI" id="CHEBI:29105"/>
    </ligand>
</feature>
<feature type="binding site" evidence="1">
    <location>
        <position position="103"/>
    </location>
    <ligand>
        <name>Zn(2+)</name>
        <dbReference type="ChEBI" id="CHEBI:29105"/>
    </ligand>
</feature>
<feature type="binding site" evidence="1">
    <location>
        <position position="130"/>
    </location>
    <ligand>
        <name>Mg(2+)</name>
        <dbReference type="ChEBI" id="CHEBI:18420"/>
    </ligand>
</feature>
<reference key="1">
    <citation type="journal article" date="1998" name="Curr. Microbiol.">
        <title>Buchnera aphidicola (Aphid endosymbiont) contains genes encoding enzymes of histidine biosynthesis.</title>
        <authorList>
            <person name="Clark M.A."/>
            <person name="Baumann L."/>
            <person name="Baumann P."/>
        </authorList>
    </citation>
    <scope>NUCLEOTIDE SEQUENCE [GENOMIC DNA]</scope>
</reference>
<reference key="2">
    <citation type="journal article" date="2002" name="Science">
        <title>50 million years of genomic stasis in endosymbiotic bacteria.</title>
        <authorList>
            <person name="Tamas I."/>
            <person name="Klasson L."/>
            <person name="Canbaeck B."/>
            <person name="Naeslund A.K."/>
            <person name="Eriksson A.-S."/>
            <person name="Wernegreen J.J."/>
            <person name="Sandstroem J.P."/>
            <person name="Moran N.A."/>
            <person name="Andersson S.G.E."/>
        </authorList>
    </citation>
    <scope>NUCLEOTIDE SEQUENCE [LARGE SCALE GENOMIC DNA]</scope>
    <source>
        <strain>Sg</strain>
    </source>
</reference>
<proteinExistence type="inferred from homology"/>
<accession>Q9ZHE4</accession>
<organism>
    <name type="scientific">Buchnera aphidicola subsp. Schizaphis graminum (strain Sg)</name>
    <dbReference type="NCBI Taxonomy" id="198804"/>
    <lineage>
        <taxon>Bacteria</taxon>
        <taxon>Pseudomonadati</taxon>
        <taxon>Pseudomonadota</taxon>
        <taxon>Gammaproteobacteria</taxon>
        <taxon>Enterobacterales</taxon>
        <taxon>Erwiniaceae</taxon>
        <taxon>Buchnera</taxon>
    </lineage>
</organism>
<comment type="catalytic activity">
    <reaction evidence="1">
        <text>D-erythro-1-(imidazol-4-yl)glycerol 3-phosphate = 3-(imidazol-4-yl)-2-oxopropyl phosphate + H2O</text>
        <dbReference type="Rhea" id="RHEA:11040"/>
        <dbReference type="ChEBI" id="CHEBI:15377"/>
        <dbReference type="ChEBI" id="CHEBI:57766"/>
        <dbReference type="ChEBI" id="CHEBI:58278"/>
        <dbReference type="EC" id="4.2.1.19"/>
    </reaction>
</comment>
<comment type="catalytic activity">
    <reaction evidence="1">
        <text>L-histidinol phosphate + H2O = L-histidinol + phosphate</text>
        <dbReference type="Rhea" id="RHEA:14465"/>
        <dbReference type="ChEBI" id="CHEBI:15377"/>
        <dbReference type="ChEBI" id="CHEBI:43474"/>
        <dbReference type="ChEBI" id="CHEBI:57699"/>
        <dbReference type="ChEBI" id="CHEBI:57980"/>
        <dbReference type="EC" id="3.1.3.15"/>
    </reaction>
</comment>
<comment type="cofactor">
    <cofactor evidence="1">
        <name>Mg(2+)</name>
        <dbReference type="ChEBI" id="CHEBI:18420"/>
    </cofactor>
</comment>
<comment type="cofactor">
    <cofactor evidence="1">
        <name>Zn(2+)</name>
        <dbReference type="ChEBI" id="CHEBI:29105"/>
    </cofactor>
</comment>
<comment type="pathway">
    <text evidence="1">Amino-acid biosynthesis; L-histidine biosynthesis; L-histidine from 5-phospho-alpha-D-ribose 1-diphosphate: step 6/9.</text>
</comment>
<comment type="pathway">
    <text evidence="1">Amino-acid biosynthesis; L-histidine biosynthesis; L-histidine from 5-phospho-alpha-D-ribose 1-diphosphate: step 8/9.</text>
</comment>
<comment type="subcellular location">
    <subcellularLocation>
        <location evidence="1">Cytoplasm</location>
    </subcellularLocation>
</comment>
<comment type="similarity">
    <text evidence="1">In the N-terminal section; belongs to the histidinol-phosphatase family.</text>
</comment>
<comment type="similarity">
    <text evidence="1">In the C-terminal section; belongs to the imidazoleglycerol-phosphate dehydratase family.</text>
</comment>
<gene>
    <name evidence="1" type="primary">hisB</name>
    <name type="ordered locus">BUsg_095</name>
</gene>
<protein>
    <recommendedName>
        <fullName evidence="1">Histidine biosynthesis bifunctional protein HisB</fullName>
    </recommendedName>
    <domain>
        <recommendedName>
            <fullName evidence="1">Histidinol-phosphatase</fullName>
            <ecNumber evidence="1">3.1.3.15</ecNumber>
        </recommendedName>
    </domain>
    <domain>
        <recommendedName>
            <fullName evidence="1">Imidazoleglycerol-phosphate dehydratase</fullName>
            <shortName evidence="1">IGPD</shortName>
            <ecNumber evidence="1">4.2.1.19</ecNumber>
        </recommendedName>
    </domain>
</protein>
<evidence type="ECO:0000255" key="1">
    <source>
        <dbReference type="HAMAP-Rule" id="MF_01022"/>
    </source>
</evidence>
<keyword id="KW-0028">Amino-acid biosynthesis</keyword>
<keyword id="KW-0963">Cytoplasm</keyword>
<keyword id="KW-0368">Histidine biosynthesis</keyword>
<keyword id="KW-0378">Hydrolase</keyword>
<keyword id="KW-0456">Lyase</keyword>
<keyword id="KW-0460">Magnesium</keyword>
<keyword id="KW-0479">Metal-binding</keyword>
<keyword id="KW-0511">Multifunctional enzyme</keyword>
<keyword id="KW-0862">Zinc</keyword>